<feature type="chain" id="PRO_1000140878" description="Small ribosomal subunit protein uS5">
    <location>
        <begin position="1"/>
        <end position="166"/>
    </location>
</feature>
<feature type="domain" description="S5 DRBM" evidence="1">
    <location>
        <begin position="11"/>
        <end position="74"/>
    </location>
</feature>
<evidence type="ECO:0000255" key="1">
    <source>
        <dbReference type="HAMAP-Rule" id="MF_01307"/>
    </source>
</evidence>
<evidence type="ECO:0000305" key="2"/>
<keyword id="KW-1185">Reference proteome</keyword>
<keyword id="KW-0687">Ribonucleoprotein</keyword>
<keyword id="KW-0689">Ribosomal protein</keyword>
<keyword id="KW-0694">RNA-binding</keyword>
<keyword id="KW-0699">rRNA-binding</keyword>
<organism>
    <name type="scientific">Pelotomaculum thermopropionicum (strain DSM 13744 / JCM 10971 / SI)</name>
    <dbReference type="NCBI Taxonomy" id="370438"/>
    <lineage>
        <taxon>Bacteria</taxon>
        <taxon>Bacillati</taxon>
        <taxon>Bacillota</taxon>
        <taxon>Clostridia</taxon>
        <taxon>Eubacteriales</taxon>
        <taxon>Desulfotomaculaceae</taxon>
        <taxon>Pelotomaculum</taxon>
    </lineage>
</organism>
<accession>A5D5H1</accession>
<comment type="function">
    <text evidence="1">With S4 and S12 plays an important role in translational accuracy.</text>
</comment>
<comment type="function">
    <text evidence="1">Located at the back of the 30S subunit body where it stabilizes the conformation of the head with respect to the body.</text>
</comment>
<comment type="subunit">
    <text evidence="1">Part of the 30S ribosomal subunit. Contacts proteins S4 and S8.</text>
</comment>
<comment type="domain">
    <text>The N-terminal domain interacts with the head of the 30S subunit; the C-terminal domain interacts with the body and contacts protein S4. The interaction surface between S4 and S5 is involved in control of translational fidelity.</text>
</comment>
<comment type="similarity">
    <text evidence="1">Belongs to the universal ribosomal protein uS5 family.</text>
</comment>
<gene>
    <name evidence="1" type="primary">rpsE</name>
    <name type="ordered locus">PTH_0336</name>
</gene>
<protein>
    <recommendedName>
        <fullName evidence="1">Small ribosomal subunit protein uS5</fullName>
    </recommendedName>
    <alternativeName>
        <fullName evidence="2">30S ribosomal protein S5</fullName>
    </alternativeName>
</protein>
<proteinExistence type="inferred from homology"/>
<sequence>MARIDASKLETTEKVVFINRVAKVVKGGRRFSFSALMVVGDGNGHVGAGLGKAGEVPEAIRKGIEDAKKNMIKVPLAGTTIPHEVIGEFGAGKVLLKPAAPGTGVIAGGPVRAILELAGVRDILTKSLGSNNANNMVRATIEALKSLKTPEEVARLRGKPVEELLG</sequence>
<dbReference type="EMBL" id="AP009389">
    <property type="protein sequence ID" value="BAF58517.1"/>
    <property type="molecule type" value="Genomic_DNA"/>
</dbReference>
<dbReference type="SMR" id="A5D5H1"/>
<dbReference type="STRING" id="370438.PTH_0336"/>
<dbReference type="KEGG" id="pth:PTH_0336"/>
<dbReference type="eggNOG" id="COG0098">
    <property type="taxonomic scope" value="Bacteria"/>
</dbReference>
<dbReference type="HOGENOM" id="CLU_065898_2_2_9"/>
<dbReference type="Proteomes" id="UP000006556">
    <property type="component" value="Chromosome"/>
</dbReference>
<dbReference type="GO" id="GO:0015935">
    <property type="term" value="C:small ribosomal subunit"/>
    <property type="evidence" value="ECO:0007669"/>
    <property type="project" value="InterPro"/>
</dbReference>
<dbReference type="GO" id="GO:0019843">
    <property type="term" value="F:rRNA binding"/>
    <property type="evidence" value="ECO:0007669"/>
    <property type="project" value="UniProtKB-UniRule"/>
</dbReference>
<dbReference type="GO" id="GO:0003735">
    <property type="term" value="F:structural constituent of ribosome"/>
    <property type="evidence" value="ECO:0007669"/>
    <property type="project" value="InterPro"/>
</dbReference>
<dbReference type="GO" id="GO:0006412">
    <property type="term" value="P:translation"/>
    <property type="evidence" value="ECO:0007669"/>
    <property type="project" value="UniProtKB-UniRule"/>
</dbReference>
<dbReference type="FunFam" id="3.30.160.20:FF:000001">
    <property type="entry name" value="30S ribosomal protein S5"/>
    <property type="match status" value="1"/>
</dbReference>
<dbReference type="FunFam" id="3.30.230.10:FF:000002">
    <property type="entry name" value="30S ribosomal protein S5"/>
    <property type="match status" value="1"/>
</dbReference>
<dbReference type="Gene3D" id="3.30.160.20">
    <property type="match status" value="1"/>
</dbReference>
<dbReference type="Gene3D" id="3.30.230.10">
    <property type="match status" value="1"/>
</dbReference>
<dbReference type="HAMAP" id="MF_01307_B">
    <property type="entry name" value="Ribosomal_uS5_B"/>
    <property type="match status" value="1"/>
</dbReference>
<dbReference type="InterPro" id="IPR020568">
    <property type="entry name" value="Ribosomal_Su5_D2-typ_SF"/>
</dbReference>
<dbReference type="InterPro" id="IPR000851">
    <property type="entry name" value="Ribosomal_uS5"/>
</dbReference>
<dbReference type="InterPro" id="IPR005712">
    <property type="entry name" value="Ribosomal_uS5_bac-type"/>
</dbReference>
<dbReference type="InterPro" id="IPR005324">
    <property type="entry name" value="Ribosomal_uS5_C"/>
</dbReference>
<dbReference type="InterPro" id="IPR013810">
    <property type="entry name" value="Ribosomal_uS5_N"/>
</dbReference>
<dbReference type="InterPro" id="IPR018192">
    <property type="entry name" value="Ribosomal_uS5_N_CS"/>
</dbReference>
<dbReference type="InterPro" id="IPR014721">
    <property type="entry name" value="Ribsml_uS5_D2-typ_fold_subgr"/>
</dbReference>
<dbReference type="NCBIfam" id="TIGR01021">
    <property type="entry name" value="rpsE_bact"/>
    <property type="match status" value="1"/>
</dbReference>
<dbReference type="PANTHER" id="PTHR48277">
    <property type="entry name" value="MITOCHONDRIAL RIBOSOMAL PROTEIN S5"/>
    <property type="match status" value="1"/>
</dbReference>
<dbReference type="PANTHER" id="PTHR48277:SF1">
    <property type="entry name" value="MITOCHONDRIAL RIBOSOMAL PROTEIN S5"/>
    <property type="match status" value="1"/>
</dbReference>
<dbReference type="Pfam" id="PF00333">
    <property type="entry name" value="Ribosomal_S5"/>
    <property type="match status" value="1"/>
</dbReference>
<dbReference type="Pfam" id="PF03719">
    <property type="entry name" value="Ribosomal_S5_C"/>
    <property type="match status" value="1"/>
</dbReference>
<dbReference type="SUPFAM" id="SSF54768">
    <property type="entry name" value="dsRNA-binding domain-like"/>
    <property type="match status" value="1"/>
</dbReference>
<dbReference type="SUPFAM" id="SSF54211">
    <property type="entry name" value="Ribosomal protein S5 domain 2-like"/>
    <property type="match status" value="1"/>
</dbReference>
<dbReference type="PROSITE" id="PS00585">
    <property type="entry name" value="RIBOSOMAL_S5"/>
    <property type="match status" value="1"/>
</dbReference>
<dbReference type="PROSITE" id="PS50881">
    <property type="entry name" value="S5_DSRBD"/>
    <property type="match status" value="1"/>
</dbReference>
<name>RS5_PELTS</name>
<reference key="1">
    <citation type="journal article" date="2008" name="Genome Res.">
        <title>The genome of Pelotomaculum thermopropionicum reveals niche-associated evolution in anaerobic microbiota.</title>
        <authorList>
            <person name="Kosaka T."/>
            <person name="Kato S."/>
            <person name="Shimoyama T."/>
            <person name="Ishii S."/>
            <person name="Abe T."/>
            <person name="Watanabe K."/>
        </authorList>
    </citation>
    <scope>NUCLEOTIDE SEQUENCE [LARGE SCALE GENOMIC DNA]</scope>
    <source>
        <strain>DSM 13744 / JCM 10971 / SI</strain>
    </source>
</reference>